<feature type="transit peptide" description="Mitochondrion" evidence="1">
    <location>
        <begin position="1"/>
        <end status="unknown"/>
    </location>
</feature>
<feature type="chain" id="PRO_0000399850" description="Altered inheritance of mitochondria protein 39, mitochondrial">
    <location>
        <begin status="unknown"/>
        <end position="395"/>
    </location>
</feature>
<feature type="transmembrane region" description="Helical" evidence="1">
    <location>
        <begin position="161"/>
        <end position="181"/>
    </location>
</feature>
<dbReference type="EMBL" id="AAFW02000030">
    <property type="protein sequence ID" value="EDN63822.1"/>
    <property type="molecule type" value="Genomic_DNA"/>
</dbReference>
<dbReference type="SMR" id="A6ZNF7"/>
<dbReference type="HOGENOM" id="CLU_058942_0_0_1"/>
<dbReference type="Proteomes" id="UP000007060">
    <property type="component" value="Unassembled WGS sequence"/>
</dbReference>
<dbReference type="GO" id="GO:0031966">
    <property type="term" value="C:mitochondrial membrane"/>
    <property type="evidence" value="ECO:0007669"/>
    <property type="project" value="UniProtKB-SubCell"/>
</dbReference>
<protein>
    <recommendedName>
        <fullName>Altered inheritance of mitochondria protein 39, mitochondrial</fullName>
    </recommendedName>
</protein>
<reference key="1">
    <citation type="journal article" date="2007" name="Proc. Natl. Acad. Sci. U.S.A.">
        <title>Genome sequencing and comparative analysis of Saccharomyces cerevisiae strain YJM789.</title>
        <authorList>
            <person name="Wei W."/>
            <person name="McCusker J.H."/>
            <person name="Hyman R.W."/>
            <person name="Jones T."/>
            <person name="Ning Y."/>
            <person name="Cao Z."/>
            <person name="Gu Z."/>
            <person name="Bruno D."/>
            <person name="Miranda M."/>
            <person name="Nguyen M."/>
            <person name="Wilhelmy J."/>
            <person name="Komp C."/>
            <person name="Tamse R."/>
            <person name="Wang X."/>
            <person name="Jia P."/>
            <person name="Luedi P."/>
            <person name="Oefner P.J."/>
            <person name="David L."/>
            <person name="Dietrich F.S."/>
            <person name="Li Y."/>
            <person name="Davis R.W."/>
            <person name="Steinmetz L.M."/>
        </authorList>
    </citation>
    <scope>NUCLEOTIDE SEQUENCE [LARGE SCALE GENOMIC DNA]</scope>
    <source>
        <strain>YJM789</strain>
    </source>
</reference>
<evidence type="ECO:0000255" key="1"/>
<evidence type="ECO:0000305" key="2"/>
<keyword id="KW-0472">Membrane</keyword>
<keyword id="KW-0496">Mitochondrion</keyword>
<keyword id="KW-0809">Transit peptide</keyword>
<keyword id="KW-0812">Transmembrane</keyword>
<keyword id="KW-1133">Transmembrane helix</keyword>
<proteinExistence type="inferred from homology"/>
<sequence length="395" mass="45881">MWGLCKNHFPSNKIQVQERNKALKPKKSGSEHKTKQLFPVFNCKKKEKGVMIRFAILRNANTSLLSARSICLFTQAPTYCHVRLNTLNKSITTKRNSLTESKRHVHDGKHFFTTPHQQQQTKLGEIEEGHSPNIKEEDLRSIGQAITHQRNKRRKQIWSAIFGGIFGVIIGYSLIYKVIYLKEQSFLPLFPSSKIRKLSTRDLKKVDINQVQKLSKLRVLEILSGHDMIKEQYGVPLLDKDGNSPTLNEFSMWCEDQDPCVTGIVMEPDDKRDSSHTWYRIPFVCKWRITHRPISIRGTIDDLLNRIGLETADLFEIISPERVYGSFKYEYPLQGDSHALHLWFHGEIELDDDSLIVYNGKYHVDVKLQEIDLFRREKNGQLVQYVLYKNEAGDK</sequence>
<name>AIM39_YEAS7</name>
<gene>
    <name type="primary">AIM39</name>
    <name type="ORF">SCY_5025</name>
</gene>
<accession>A6ZNF7</accession>
<comment type="subcellular location">
    <subcellularLocation>
        <location evidence="2">Mitochondrion membrane</location>
        <topology evidence="2">Single-pass membrane protein</topology>
    </subcellularLocation>
</comment>
<comment type="similarity">
    <text evidence="2">Belongs to the AIM39 family.</text>
</comment>
<organism>
    <name type="scientific">Saccharomyces cerevisiae (strain YJM789)</name>
    <name type="common">Baker's yeast</name>
    <dbReference type="NCBI Taxonomy" id="307796"/>
    <lineage>
        <taxon>Eukaryota</taxon>
        <taxon>Fungi</taxon>
        <taxon>Dikarya</taxon>
        <taxon>Ascomycota</taxon>
        <taxon>Saccharomycotina</taxon>
        <taxon>Saccharomycetes</taxon>
        <taxon>Saccharomycetales</taxon>
        <taxon>Saccharomycetaceae</taxon>
        <taxon>Saccharomyces</taxon>
    </lineage>
</organism>